<gene>
    <name evidence="1" type="primary">rpmH</name>
    <name type="ordered locus">GM21_4152</name>
</gene>
<evidence type="ECO:0000255" key="1">
    <source>
        <dbReference type="HAMAP-Rule" id="MF_00391"/>
    </source>
</evidence>
<evidence type="ECO:0000305" key="2"/>
<reference key="1">
    <citation type="submission" date="2009-07" db="EMBL/GenBank/DDBJ databases">
        <title>Complete sequence of Geobacter sp. M21.</title>
        <authorList>
            <consortium name="US DOE Joint Genome Institute"/>
            <person name="Lucas S."/>
            <person name="Copeland A."/>
            <person name="Lapidus A."/>
            <person name="Glavina del Rio T."/>
            <person name="Dalin E."/>
            <person name="Tice H."/>
            <person name="Bruce D."/>
            <person name="Goodwin L."/>
            <person name="Pitluck S."/>
            <person name="Saunders E."/>
            <person name="Brettin T."/>
            <person name="Detter J.C."/>
            <person name="Han C."/>
            <person name="Larimer F."/>
            <person name="Land M."/>
            <person name="Hauser L."/>
            <person name="Kyrpides N."/>
            <person name="Ovchinnikova G."/>
            <person name="Lovley D."/>
        </authorList>
    </citation>
    <scope>NUCLEOTIDE SEQUENCE [LARGE SCALE GENOMIC DNA]</scope>
    <source>
        <strain>M21</strain>
    </source>
</reference>
<proteinExistence type="inferred from homology"/>
<feature type="chain" id="PRO_1000205829" description="Large ribosomal subunit protein bL34">
    <location>
        <begin position="1"/>
        <end position="49"/>
    </location>
</feature>
<accession>C6DYS4</accession>
<dbReference type="EMBL" id="CP001661">
    <property type="protein sequence ID" value="ACT20167.1"/>
    <property type="molecule type" value="Genomic_DNA"/>
</dbReference>
<dbReference type="SMR" id="C6DYS4"/>
<dbReference type="STRING" id="443144.GM21_4152"/>
<dbReference type="KEGG" id="gem:GM21_4152"/>
<dbReference type="eggNOG" id="COG0230">
    <property type="taxonomic scope" value="Bacteria"/>
</dbReference>
<dbReference type="HOGENOM" id="CLU_129938_2_0_7"/>
<dbReference type="OrthoDB" id="9804164at2"/>
<dbReference type="GO" id="GO:1990904">
    <property type="term" value="C:ribonucleoprotein complex"/>
    <property type="evidence" value="ECO:0007669"/>
    <property type="project" value="UniProtKB-KW"/>
</dbReference>
<dbReference type="GO" id="GO:0005840">
    <property type="term" value="C:ribosome"/>
    <property type="evidence" value="ECO:0007669"/>
    <property type="project" value="UniProtKB-KW"/>
</dbReference>
<dbReference type="GO" id="GO:0003735">
    <property type="term" value="F:structural constituent of ribosome"/>
    <property type="evidence" value="ECO:0007669"/>
    <property type="project" value="InterPro"/>
</dbReference>
<dbReference type="GO" id="GO:0006412">
    <property type="term" value="P:translation"/>
    <property type="evidence" value="ECO:0007669"/>
    <property type="project" value="UniProtKB-UniRule"/>
</dbReference>
<dbReference type="FunFam" id="1.10.287.3980:FF:000001">
    <property type="entry name" value="Mitochondrial ribosomal protein L34"/>
    <property type="match status" value="1"/>
</dbReference>
<dbReference type="Gene3D" id="1.10.287.3980">
    <property type="match status" value="1"/>
</dbReference>
<dbReference type="HAMAP" id="MF_00391">
    <property type="entry name" value="Ribosomal_bL34"/>
    <property type="match status" value="1"/>
</dbReference>
<dbReference type="InterPro" id="IPR000271">
    <property type="entry name" value="Ribosomal_bL34"/>
</dbReference>
<dbReference type="InterPro" id="IPR020939">
    <property type="entry name" value="Ribosomal_bL34_CS"/>
</dbReference>
<dbReference type="NCBIfam" id="TIGR01030">
    <property type="entry name" value="rpmH_bact"/>
    <property type="match status" value="1"/>
</dbReference>
<dbReference type="PANTHER" id="PTHR14503:SF4">
    <property type="entry name" value="LARGE RIBOSOMAL SUBUNIT PROTEIN BL34M"/>
    <property type="match status" value="1"/>
</dbReference>
<dbReference type="PANTHER" id="PTHR14503">
    <property type="entry name" value="MITOCHONDRIAL RIBOSOMAL PROTEIN 34 FAMILY MEMBER"/>
    <property type="match status" value="1"/>
</dbReference>
<dbReference type="Pfam" id="PF00468">
    <property type="entry name" value="Ribosomal_L34"/>
    <property type="match status" value="1"/>
</dbReference>
<dbReference type="PROSITE" id="PS00784">
    <property type="entry name" value="RIBOSOMAL_L34"/>
    <property type="match status" value="1"/>
</dbReference>
<name>RL34_GEOSM</name>
<organism>
    <name type="scientific">Geobacter sp. (strain M21)</name>
    <dbReference type="NCBI Taxonomy" id="443144"/>
    <lineage>
        <taxon>Bacteria</taxon>
        <taxon>Pseudomonadati</taxon>
        <taxon>Thermodesulfobacteriota</taxon>
        <taxon>Desulfuromonadia</taxon>
        <taxon>Geobacterales</taxon>
        <taxon>Geobacteraceae</taxon>
        <taxon>Geobacter</taxon>
    </lineage>
</organism>
<keyword id="KW-0687">Ribonucleoprotein</keyword>
<keyword id="KW-0689">Ribosomal protein</keyword>
<sequence length="49" mass="5726">MKRTFQPSNTSRKRTHGFLVRMATKNGRLVIKRRRAKGRKRLSVSIATK</sequence>
<comment type="similarity">
    <text evidence="1">Belongs to the bacterial ribosomal protein bL34 family.</text>
</comment>
<protein>
    <recommendedName>
        <fullName evidence="1">Large ribosomal subunit protein bL34</fullName>
    </recommendedName>
    <alternativeName>
        <fullName evidence="2">50S ribosomal protein L34</fullName>
    </alternativeName>
</protein>